<reference key="1">
    <citation type="journal article" date="1997" name="Plant J.">
        <title>Characterization of proteins that interact with the GTP-bound form of the regulatory GTPase Ran in Arabidopsis.</title>
        <authorList>
            <person name="Haizel T."/>
            <person name="Merkle T."/>
            <person name="Pay A."/>
            <person name="Fejes E."/>
            <person name="Nagy F."/>
        </authorList>
    </citation>
    <scope>NUCLEOTIDE SEQUENCE [MRNA]</scope>
    <scope>CHARACTERIZATION</scope>
    <scope>INTERACTION WITH RAN1; RAN2 AND RAN3</scope>
</reference>
<reference key="2">
    <citation type="journal article" date="1999" name="Nature">
        <title>Sequence and analysis of chromosome 2 of the plant Arabidopsis thaliana.</title>
        <authorList>
            <person name="Lin X."/>
            <person name="Kaul S."/>
            <person name="Rounsley S.D."/>
            <person name="Shea T.P."/>
            <person name="Benito M.-I."/>
            <person name="Town C.D."/>
            <person name="Fujii C.Y."/>
            <person name="Mason T.M."/>
            <person name="Bowman C.L."/>
            <person name="Barnstead M.E."/>
            <person name="Feldblyum T.V."/>
            <person name="Buell C.R."/>
            <person name="Ketchum K.A."/>
            <person name="Lee J.J."/>
            <person name="Ronning C.M."/>
            <person name="Koo H.L."/>
            <person name="Moffat K.S."/>
            <person name="Cronin L.A."/>
            <person name="Shen M."/>
            <person name="Pai G."/>
            <person name="Van Aken S."/>
            <person name="Umayam L."/>
            <person name="Tallon L.J."/>
            <person name="Gill J.E."/>
            <person name="Adams M.D."/>
            <person name="Carrera A.J."/>
            <person name="Creasy T.H."/>
            <person name="Goodman H.M."/>
            <person name="Somerville C.R."/>
            <person name="Copenhaver G.P."/>
            <person name="Preuss D."/>
            <person name="Nierman W.C."/>
            <person name="White O."/>
            <person name="Eisen J.A."/>
            <person name="Salzberg S.L."/>
            <person name="Fraser C.M."/>
            <person name="Venter J.C."/>
        </authorList>
    </citation>
    <scope>NUCLEOTIDE SEQUENCE [LARGE SCALE GENOMIC DNA]</scope>
    <source>
        <strain>cv. Columbia</strain>
    </source>
</reference>
<reference key="3">
    <citation type="journal article" date="2017" name="Plant J.">
        <title>Araport11: a complete reannotation of the Arabidopsis thaliana reference genome.</title>
        <authorList>
            <person name="Cheng C.Y."/>
            <person name="Krishnakumar V."/>
            <person name="Chan A.P."/>
            <person name="Thibaud-Nissen F."/>
            <person name="Schobel S."/>
            <person name="Town C.D."/>
        </authorList>
    </citation>
    <scope>GENOME REANNOTATION</scope>
    <source>
        <strain>cv. Columbia</strain>
    </source>
</reference>
<reference key="4">
    <citation type="journal article" date="2003" name="Science">
        <title>Empirical analysis of transcriptional activity in the Arabidopsis genome.</title>
        <authorList>
            <person name="Yamada K."/>
            <person name="Lim J."/>
            <person name="Dale J.M."/>
            <person name="Chen H."/>
            <person name="Shinn P."/>
            <person name="Palm C.J."/>
            <person name="Southwick A.M."/>
            <person name="Wu H.C."/>
            <person name="Kim C.J."/>
            <person name="Nguyen M."/>
            <person name="Pham P.K."/>
            <person name="Cheuk R.F."/>
            <person name="Karlin-Newmann G."/>
            <person name="Liu S.X."/>
            <person name="Lam B."/>
            <person name="Sakano H."/>
            <person name="Wu T."/>
            <person name="Yu G."/>
            <person name="Miranda M."/>
            <person name="Quach H.L."/>
            <person name="Tripp M."/>
            <person name="Chang C.H."/>
            <person name="Lee J.M."/>
            <person name="Toriumi M.J."/>
            <person name="Chan M.M."/>
            <person name="Tang C.C."/>
            <person name="Onodera C.S."/>
            <person name="Deng J.M."/>
            <person name="Akiyama K."/>
            <person name="Ansari Y."/>
            <person name="Arakawa T."/>
            <person name="Banh J."/>
            <person name="Banno F."/>
            <person name="Bowser L."/>
            <person name="Brooks S.Y."/>
            <person name="Carninci P."/>
            <person name="Chao Q."/>
            <person name="Choy N."/>
            <person name="Enju A."/>
            <person name="Goldsmith A.D."/>
            <person name="Gurjal M."/>
            <person name="Hansen N.F."/>
            <person name="Hayashizaki Y."/>
            <person name="Johnson-Hopson C."/>
            <person name="Hsuan V.W."/>
            <person name="Iida K."/>
            <person name="Karnes M."/>
            <person name="Khan S."/>
            <person name="Koesema E."/>
            <person name="Ishida J."/>
            <person name="Jiang P.X."/>
            <person name="Jones T."/>
            <person name="Kawai J."/>
            <person name="Kamiya A."/>
            <person name="Meyers C."/>
            <person name="Nakajima M."/>
            <person name="Narusaka M."/>
            <person name="Seki M."/>
            <person name="Sakurai T."/>
            <person name="Satou M."/>
            <person name="Tamse R."/>
            <person name="Vaysberg M."/>
            <person name="Wallender E.K."/>
            <person name="Wong C."/>
            <person name="Yamamura Y."/>
            <person name="Yuan S."/>
            <person name="Shinozaki K."/>
            <person name="Davis R.W."/>
            <person name="Theologis A."/>
            <person name="Ecker J.R."/>
        </authorList>
    </citation>
    <scope>NUCLEOTIDE SEQUENCE [LARGE SCALE MRNA]</scope>
    <source>
        <strain>cv. Columbia</strain>
    </source>
</reference>
<reference key="5">
    <citation type="submission" date="2005-01" db="EMBL/GenBank/DDBJ databases">
        <title>Arabidopsis ORF clones.</title>
        <authorList>
            <person name="Kim C.J."/>
            <person name="Chen H."/>
            <person name="Cheuk R.F."/>
            <person name="Shinn P."/>
            <person name="Ecker J.R."/>
        </authorList>
    </citation>
    <scope>NUCLEOTIDE SEQUENCE [LARGE SCALE MRNA]</scope>
    <source>
        <strain>cv. Columbia</strain>
    </source>
</reference>
<reference key="6">
    <citation type="journal article" date="2012" name="Mol. Cell. Proteomics">
        <title>Comparative large-scale characterisation of plant vs. mammal proteins reveals similar and idiosyncratic N-alpha acetylation features.</title>
        <authorList>
            <person name="Bienvenut W.V."/>
            <person name="Sumpton D."/>
            <person name="Martinez A."/>
            <person name="Lilla S."/>
            <person name="Espagne C."/>
            <person name="Meinnel T."/>
            <person name="Giglione C."/>
        </authorList>
    </citation>
    <scope>ACETYLATION [LARGE SCALE ANALYSIS] AT ALA-2</scope>
    <scope>CLEAVAGE OF INITIATOR METHIONINE [LARGE SCALE ANALYSIS]</scope>
    <scope>IDENTIFICATION BY MASS SPECTROMETRY [LARGE SCALE ANALYSIS]</scope>
</reference>
<sequence>MASISNEPERENRDEEETGANEDEDTGAQVAPIVRLEEVAVTTGEEDEDTILDLKSKLYRFDKDGSQWKERGAGTVKFLKHRVSGKIRLVMRQSKTLKICANHLVGSGMSVQEHAGNDKSCVWHARDFSDGELKDELFCIRFASVENCKAFMQKFKEVAESEEEKEESKDASDTAGLLEKLTVEEKESEKKPVEKAEENKKSEAVEEKKTEESVPSA</sequence>
<name>RBP1B_ARATH</name>
<protein>
    <recommendedName>
        <fullName>Ran-binding protein 1 homolog b</fullName>
    </recommendedName>
</protein>
<organism>
    <name type="scientific">Arabidopsis thaliana</name>
    <name type="common">Mouse-ear cress</name>
    <dbReference type="NCBI Taxonomy" id="3702"/>
    <lineage>
        <taxon>Eukaryota</taxon>
        <taxon>Viridiplantae</taxon>
        <taxon>Streptophyta</taxon>
        <taxon>Embryophyta</taxon>
        <taxon>Tracheophyta</taxon>
        <taxon>Spermatophyta</taxon>
        <taxon>Magnoliopsida</taxon>
        <taxon>eudicotyledons</taxon>
        <taxon>Gunneridae</taxon>
        <taxon>Pentapetalae</taxon>
        <taxon>rosids</taxon>
        <taxon>malvids</taxon>
        <taxon>Brassicales</taxon>
        <taxon>Brassicaceae</taxon>
        <taxon>Camelineae</taxon>
        <taxon>Arabidopsis</taxon>
    </lineage>
</organism>
<comment type="subunit">
    <text evidence="4">Interacts with the GTP-bound form of RAN1, RAN2 and RAN3.</text>
</comment>
<comment type="subcellular location">
    <subcellularLocation>
        <location evidence="1">Nucleus</location>
        <location evidence="1">Nuclear pore complex</location>
    </subcellularLocation>
</comment>
<gene>
    <name type="primary">RANBP1B</name>
    <name type="ordered locus">At2g30060</name>
    <name type="ORF">F23F1.1</name>
    <name type="ORF">T27E13.20</name>
</gene>
<feature type="initiator methionine" description="Removed" evidence="6">
    <location>
        <position position="1"/>
    </location>
</feature>
<feature type="chain" id="PRO_0000097188" description="Ran-binding protein 1 homolog b">
    <location>
        <begin position="2"/>
        <end position="217"/>
    </location>
</feature>
<feature type="domain" description="RanBD1" evidence="2">
    <location>
        <begin position="29"/>
        <end position="164"/>
    </location>
</feature>
<feature type="region of interest" description="Disordered" evidence="3">
    <location>
        <begin position="1"/>
        <end position="32"/>
    </location>
</feature>
<feature type="region of interest" description="Disordered" evidence="3">
    <location>
        <begin position="160"/>
        <end position="217"/>
    </location>
</feature>
<feature type="compositionally biased region" description="Acidic residues" evidence="3">
    <location>
        <begin position="14"/>
        <end position="26"/>
    </location>
</feature>
<feature type="compositionally biased region" description="Basic and acidic residues" evidence="3">
    <location>
        <begin position="181"/>
        <end position="217"/>
    </location>
</feature>
<feature type="modified residue" description="N-acetylalanine" evidence="6">
    <location>
        <position position="2"/>
    </location>
</feature>
<feature type="sequence conflict" description="In Ref. 4; AAM13098." evidence="5" ref="4">
    <original>E</original>
    <variation>K</variation>
    <location>
        <position position="9"/>
    </location>
</feature>
<feature type="sequence conflict" description="In Ref. 1; CAA66046." evidence="5" ref="1">
    <original>L</original>
    <variation>V</variation>
    <location>
        <position position="79"/>
    </location>
</feature>
<feature type="sequence conflict" description="In Ref. 1; CAA66046." evidence="5" ref="1">
    <original>A</original>
    <variation>G</variation>
    <location>
        <position position="143"/>
    </location>
</feature>
<accession>Q8RWG8</accession>
<accession>O04150</accession>
<accession>O64739</accession>
<accession>Q2HIH4</accession>
<keyword id="KW-0007">Acetylation</keyword>
<keyword id="KW-0509">mRNA transport</keyword>
<keyword id="KW-0906">Nuclear pore complex</keyword>
<keyword id="KW-0539">Nucleus</keyword>
<keyword id="KW-0653">Protein transport</keyword>
<keyword id="KW-1185">Reference proteome</keyword>
<keyword id="KW-0811">Translocation</keyword>
<keyword id="KW-0813">Transport</keyword>
<dbReference type="EMBL" id="X97378">
    <property type="protein sequence ID" value="CAA66046.1"/>
    <property type="molecule type" value="mRNA"/>
</dbReference>
<dbReference type="EMBL" id="AC004165">
    <property type="protein sequence ID" value="AAC16966.1"/>
    <property type="molecule type" value="Genomic_DNA"/>
</dbReference>
<dbReference type="EMBL" id="AC004680">
    <property type="protein sequence ID" value="AAM14982.1"/>
    <property type="molecule type" value="Genomic_DNA"/>
</dbReference>
<dbReference type="EMBL" id="CP002685">
    <property type="protein sequence ID" value="AEC08340.1"/>
    <property type="molecule type" value="Genomic_DNA"/>
</dbReference>
<dbReference type="EMBL" id="AY093099">
    <property type="protein sequence ID" value="AAM13098.1"/>
    <property type="molecule type" value="mRNA"/>
</dbReference>
<dbReference type="EMBL" id="BT020304">
    <property type="protein sequence ID" value="AAV84525.1"/>
    <property type="molecule type" value="mRNA"/>
</dbReference>
<dbReference type="EMBL" id="BT020473">
    <property type="protein sequence ID" value="AAW38974.1"/>
    <property type="molecule type" value="mRNA"/>
</dbReference>
<dbReference type="EMBL" id="BT024607">
    <property type="protein sequence ID" value="ABD43005.1"/>
    <property type="molecule type" value="mRNA"/>
</dbReference>
<dbReference type="PIR" id="T00592">
    <property type="entry name" value="T00592"/>
</dbReference>
<dbReference type="RefSeq" id="NP_180567.1">
    <property type="nucleotide sequence ID" value="NM_128561.5"/>
</dbReference>
<dbReference type="SMR" id="Q8RWG8"/>
<dbReference type="BioGRID" id="2906">
    <property type="interactions" value="8"/>
</dbReference>
<dbReference type="FunCoup" id="Q8RWG8">
    <property type="interactions" value="4172"/>
</dbReference>
<dbReference type="IntAct" id="Q8RWG8">
    <property type="interactions" value="3"/>
</dbReference>
<dbReference type="STRING" id="3702.Q8RWG8"/>
<dbReference type="iPTMnet" id="Q8RWG8"/>
<dbReference type="MetOSite" id="Q8RWG8"/>
<dbReference type="PaxDb" id="3702-AT2G30060.1"/>
<dbReference type="ProteomicsDB" id="225976"/>
<dbReference type="EnsemblPlants" id="AT2G30060.1">
    <property type="protein sequence ID" value="AT2G30060.1"/>
    <property type="gene ID" value="AT2G30060"/>
</dbReference>
<dbReference type="GeneID" id="817557"/>
<dbReference type="Gramene" id="AT2G30060.1">
    <property type="protein sequence ID" value="AT2G30060.1"/>
    <property type="gene ID" value="AT2G30060"/>
</dbReference>
<dbReference type="KEGG" id="ath:AT2G30060"/>
<dbReference type="Araport" id="AT2G30060"/>
<dbReference type="TAIR" id="AT2G30060"/>
<dbReference type="eggNOG" id="KOG0864">
    <property type="taxonomic scope" value="Eukaryota"/>
</dbReference>
<dbReference type="HOGENOM" id="CLU_067861_1_0_1"/>
<dbReference type="InParanoid" id="Q8RWG8"/>
<dbReference type="OMA" id="HYIYPNK"/>
<dbReference type="OrthoDB" id="2357150at2759"/>
<dbReference type="PhylomeDB" id="Q8RWG8"/>
<dbReference type="CD-CODE" id="4299E36E">
    <property type="entry name" value="Nucleolus"/>
</dbReference>
<dbReference type="PRO" id="PR:Q8RWG8"/>
<dbReference type="Proteomes" id="UP000006548">
    <property type="component" value="Chromosome 2"/>
</dbReference>
<dbReference type="ExpressionAtlas" id="Q8RWG8">
    <property type="expression patterns" value="baseline and differential"/>
</dbReference>
<dbReference type="GO" id="GO:0005829">
    <property type="term" value="C:cytosol"/>
    <property type="evidence" value="ECO:0007005"/>
    <property type="project" value="TAIR"/>
</dbReference>
<dbReference type="GO" id="GO:0005643">
    <property type="term" value="C:nuclear pore"/>
    <property type="evidence" value="ECO:0007669"/>
    <property type="project" value="UniProtKB-SubCell"/>
</dbReference>
<dbReference type="GO" id="GO:0005777">
    <property type="term" value="C:peroxisome"/>
    <property type="evidence" value="ECO:0007005"/>
    <property type="project" value="TAIR"/>
</dbReference>
<dbReference type="GO" id="GO:0051028">
    <property type="term" value="P:mRNA transport"/>
    <property type="evidence" value="ECO:0007669"/>
    <property type="project" value="UniProtKB-KW"/>
</dbReference>
<dbReference type="GO" id="GO:0006913">
    <property type="term" value="P:nucleocytoplasmic transport"/>
    <property type="evidence" value="ECO:0007669"/>
    <property type="project" value="InterPro"/>
</dbReference>
<dbReference type="GO" id="GO:0015031">
    <property type="term" value="P:protein transport"/>
    <property type="evidence" value="ECO:0007669"/>
    <property type="project" value="UniProtKB-KW"/>
</dbReference>
<dbReference type="CDD" id="cd13179">
    <property type="entry name" value="RanBD_RanBP1"/>
    <property type="match status" value="1"/>
</dbReference>
<dbReference type="FunFam" id="2.30.29.30:FF:000245">
    <property type="entry name" value="Ran-binding protein 1 b"/>
    <property type="match status" value="1"/>
</dbReference>
<dbReference type="Gene3D" id="2.30.29.30">
    <property type="entry name" value="Pleckstrin-homology domain (PH domain)/Phosphotyrosine-binding domain (PTB)"/>
    <property type="match status" value="1"/>
</dbReference>
<dbReference type="InterPro" id="IPR011993">
    <property type="entry name" value="PH-like_dom_sf"/>
</dbReference>
<dbReference type="InterPro" id="IPR000156">
    <property type="entry name" value="Ran_bind_dom"/>
</dbReference>
<dbReference type="InterPro" id="IPR045255">
    <property type="entry name" value="RanBP1-like"/>
</dbReference>
<dbReference type="InterPro" id="IPR045256">
    <property type="entry name" value="RanBP1_RanBD"/>
</dbReference>
<dbReference type="PANTHER" id="PTHR23138">
    <property type="entry name" value="RAN BINDING PROTEIN"/>
    <property type="match status" value="1"/>
</dbReference>
<dbReference type="PANTHER" id="PTHR23138:SF184">
    <property type="entry name" value="RAN-BINDING PROTEIN 1 HOMOLOG B"/>
    <property type="match status" value="1"/>
</dbReference>
<dbReference type="Pfam" id="PF00638">
    <property type="entry name" value="Ran_BP1"/>
    <property type="match status" value="1"/>
</dbReference>
<dbReference type="SMART" id="SM00160">
    <property type="entry name" value="RanBD"/>
    <property type="match status" value="1"/>
</dbReference>
<dbReference type="SUPFAM" id="SSF50729">
    <property type="entry name" value="PH domain-like"/>
    <property type="match status" value="1"/>
</dbReference>
<dbReference type="PROSITE" id="PS50196">
    <property type="entry name" value="RANBD1"/>
    <property type="match status" value="1"/>
</dbReference>
<proteinExistence type="evidence at protein level"/>
<evidence type="ECO:0000250" key="1"/>
<evidence type="ECO:0000255" key="2">
    <source>
        <dbReference type="PROSITE-ProRule" id="PRU00164"/>
    </source>
</evidence>
<evidence type="ECO:0000256" key="3">
    <source>
        <dbReference type="SAM" id="MobiDB-lite"/>
    </source>
</evidence>
<evidence type="ECO:0000269" key="4">
    <source>
    </source>
</evidence>
<evidence type="ECO:0000305" key="5"/>
<evidence type="ECO:0007744" key="6">
    <source>
    </source>
</evidence>